<feature type="chain" id="PRO_0000421971" description="Phosphoinositide phosphatase SAC5">
    <location>
        <begin position="1"/>
        <end position="785"/>
    </location>
</feature>
<feature type="domain" description="SAC" evidence="2">
    <location>
        <begin position="158"/>
        <end position="533"/>
    </location>
</feature>
<feature type="region of interest" description="Disordered" evidence="3">
    <location>
        <begin position="688"/>
        <end position="707"/>
    </location>
</feature>
<feature type="short sequence motif" description="Phosphatase catalytic core">
    <location>
        <begin position="469"/>
        <end position="480"/>
    </location>
</feature>
<feature type="compositionally biased region" description="Polar residues" evidence="3">
    <location>
        <begin position="688"/>
        <end position="700"/>
    </location>
</feature>
<feature type="sequence conflict" description="In Ref. 5; BAF01585." evidence="5" ref="5">
    <original>G</original>
    <variation>S</variation>
    <location>
        <position position="282"/>
    </location>
</feature>
<evidence type="ECO:0000250" key="1"/>
<evidence type="ECO:0000255" key="2">
    <source>
        <dbReference type="PROSITE-ProRule" id="PRU00183"/>
    </source>
</evidence>
<evidence type="ECO:0000256" key="3">
    <source>
        <dbReference type="SAM" id="MobiDB-lite"/>
    </source>
</evidence>
<evidence type="ECO:0000269" key="4">
    <source>
    </source>
</evidence>
<evidence type="ECO:0000305" key="5"/>
<keyword id="KW-0378">Hydrolase</keyword>
<keyword id="KW-0472">Membrane</keyword>
<keyword id="KW-1185">Reference proteome</keyword>
<keyword id="KW-0926">Vacuole</keyword>
<proteinExistence type="evidence at transcript level"/>
<sequence length="785" mass="89837">MGSEPRFEPRPELIDLPVLQKFKLYATPSNFYLIGRDENKSFRRILKIDRRDQNELNLFEDPTRYTKDEMRELKRRMIVGNEESGGFKAITTCYGIIGFVRFLEPYYMLLITKRKKVGEICGHTVYGIAESQMIAIPHPSIQSKVAKSEAELRYKKLLSVVDLSKNFYFSYTYHLMYSLQKNIGNTERGNPHDNTMFVWNSFLTREIRKILQNSIWTVALIYGFFQQTKCSVSGEKFVFTIIARRSRHYAGTRYLRRGVNDIGRVANDVETEQIVSKVVPAGQKIPITSVVQVRGSIPLFWSQEASVFNPQPEIILNKKDANYEATQHHFQNLRQRYGNRIIILNLLKTVTGEKKHRETILRGEFAKTIRFINKGMDREHRLKAIHFDLSKHYKKGADGAFNHLCIFSRKSLELTDLFYCKAPSGVGAEEVIYDSFFNNPIPSQDEEASSPEKEDMKADIFLLQNGVLRTNCIDCLDRTNFAQYAHGLVSLGHQLRTLGISGPPVVDLNNPLAIELMDAYQKMGNTLAMQYGGSEAHSKMFCDLRGNWNMVMRQRDIFTAVRRYYSNAYQDSDKQNAINVFLGHFRPRLGRPALWELDSDQHNIGRSGSNLDIENMRPLIRRSFSDNIIMDCDLNLEELVRENSQPTYEGLNGGVSGTNLEFPFYETEPASLSFLSVMRNEELMRETGSGQMFQGSSSNSDSHRPNDIPGFSHSYVTKFTPAEDIFERGSSKSVSSDNLFTDRDESVTSLTNTNSSFEFPIMGGSDLLPGFSNAFARWVFSARAW</sequence>
<dbReference type="EC" id="3.1.3.-"/>
<dbReference type="EMBL" id="AY227248">
    <property type="protein sequence ID" value="AAP49838.1"/>
    <property type="molecule type" value="mRNA"/>
</dbReference>
<dbReference type="EMBL" id="AC007843">
    <property type="protein sequence ID" value="AAF97309.1"/>
    <property type="status" value="ALT_SEQ"/>
    <property type="molecule type" value="Genomic_DNA"/>
</dbReference>
<dbReference type="EMBL" id="CP002684">
    <property type="protein sequence ID" value="AEE29574.1"/>
    <property type="molecule type" value="Genomic_DNA"/>
</dbReference>
<dbReference type="EMBL" id="AY093760">
    <property type="protein sequence ID" value="AAM10384.1"/>
    <property type="molecule type" value="mRNA"/>
</dbReference>
<dbReference type="EMBL" id="BT002292">
    <property type="protein sequence ID" value="AAN72303.1"/>
    <property type="molecule type" value="mRNA"/>
</dbReference>
<dbReference type="EMBL" id="AK229748">
    <property type="protein sequence ID" value="BAF01585.1"/>
    <property type="molecule type" value="mRNA"/>
</dbReference>
<dbReference type="PIR" id="H86309">
    <property type="entry name" value="H86309"/>
</dbReference>
<dbReference type="RefSeq" id="NP_173177.2">
    <property type="nucleotide sequence ID" value="NM_101595.6"/>
</dbReference>
<dbReference type="SMR" id="Q8RW97"/>
<dbReference type="BioGRID" id="23545">
    <property type="interactions" value="1"/>
</dbReference>
<dbReference type="FunCoup" id="Q8RW97">
    <property type="interactions" value="3983"/>
</dbReference>
<dbReference type="IntAct" id="Q8RW97">
    <property type="interactions" value="1"/>
</dbReference>
<dbReference type="STRING" id="3702.Q8RW97"/>
<dbReference type="GlyGen" id="Q8RW97">
    <property type="glycosylation" value="1 site"/>
</dbReference>
<dbReference type="iPTMnet" id="Q8RW97"/>
<dbReference type="PaxDb" id="3702-AT1G17340.1"/>
<dbReference type="ProteomicsDB" id="226662"/>
<dbReference type="EnsemblPlants" id="AT1G17340.1">
    <property type="protein sequence ID" value="AT1G17340.1"/>
    <property type="gene ID" value="AT1G17340"/>
</dbReference>
<dbReference type="GeneID" id="838305"/>
<dbReference type="Gramene" id="AT1G17340.1">
    <property type="protein sequence ID" value="AT1G17340.1"/>
    <property type="gene ID" value="AT1G17340"/>
</dbReference>
<dbReference type="KEGG" id="ath:AT1G17340"/>
<dbReference type="Araport" id="AT1G17340"/>
<dbReference type="TAIR" id="AT1G17340">
    <property type="gene designation" value="SAC5"/>
</dbReference>
<dbReference type="eggNOG" id="KOG1888">
    <property type="taxonomic scope" value="Eukaryota"/>
</dbReference>
<dbReference type="HOGENOM" id="CLU_003016_4_2_1"/>
<dbReference type="InParanoid" id="Q8RW97"/>
<dbReference type="OMA" id="FPFYETE"/>
<dbReference type="OrthoDB" id="405996at2759"/>
<dbReference type="PhylomeDB" id="Q8RW97"/>
<dbReference type="BioCyc" id="ARA:AT1G17340-MONOMER"/>
<dbReference type="PRO" id="PR:Q8RW97"/>
<dbReference type="Proteomes" id="UP000006548">
    <property type="component" value="Chromosome 1"/>
</dbReference>
<dbReference type="ExpressionAtlas" id="Q8RW97">
    <property type="expression patterns" value="baseline and differential"/>
</dbReference>
<dbReference type="GO" id="GO:0005774">
    <property type="term" value="C:vacuolar membrane"/>
    <property type="evidence" value="ECO:0007669"/>
    <property type="project" value="UniProtKB-SubCell"/>
</dbReference>
<dbReference type="GO" id="GO:0043813">
    <property type="term" value="F:phosphatidylinositol-3,5-bisphosphate 5-phosphatase activity"/>
    <property type="evidence" value="ECO:0007669"/>
    <property type="project" value="InterPro"/>
</dbReference>
<dbReference type="GO" id="GO:0046856">
    <property type="term" value="P:phosphatidylinositol dephosphorylation"/>
    <property type="evidence" value="ECO:0007669"/>
    <property type="project" value="InterPro"/>
</dbReference>
<dbReference type="InterPro" id="IPR043573">
    <property type="entry name" value="Fig4-like"/>
</dbReference>
<dbReference type="InterPro" id="IPR002013">
    <property type="entry name" value="SAC_dom"/>
</dbReference>
<dbReference type="PANTHER" id="PTHR45738:SF6">
    <property type="entry name" value="PHOSPHOINOSITIDE PHOSPHATASE SAC5"/>
    <property type="match status" value="1"/>
</dbReference>
<dbReference type="PANTHER" id="PTHR45738">
    <property type="entry name" value="POLYPHOSPHOINOSITIDE PHOSPHATASE"/>
    <property type="match status" value="1"/>
</dbReference>
<dbReference type="Pfam" id="PF02383">
    <property type="entry name" value="Syja_N"/>
    <property type="match status" value="1"/>
</dbReference>
<dbReference type="PROSITE" id="PS50275">
    <property type="entry name" value="SAC"/>
    <property type="match status" value="1"/>
</dbReference>
<reference key="1">
    <citation type="journal article" date="2003" name="Plant Physiol.">
        <title>The SAC domain-containing protein gene family in Arabidopsis.</title>
        <authorList>
            <person name="Zhong R."/>
            <person name="Ye Z.-H."/>
        </authorList>
    </citation>
    <scope>NUCLEOTIDE SEQUENCE [MRNA]</scope>
    <scope>GENE FAMILY</scope>
    <scope>DOMAIN</scope>
    <scope>TISSUE SPECIFICITY</scope>
</reference>
<reference key="2">
    <citation type="journal article" date="2000" name="Nature">
        <title>Sequence and analysis of chromosome 1 of the plant Arabidopsis thaliana.</title>
        <authorList>
            <person name="Theologis A."/>
            <person name="Ecker J.R."/>
            <person name="Palm C.J."/>
            <person name="Federspiel N.A."/>
            <person name="Kaul S."/>
            <person name="White O."/>
            <person name="Alonso J."/>
            <person name="Altafi H."/>
            <person name="Araujo R."/>
            <person name="Bowman C.L."/>
            <person name="Brooks S.Y."/>
            <person name="Buehler E."/>
            <person name="Chan A."/>
            <person name="Chao Q."/>
            <person name="Chen H."/>
            <person name="Cheuk R.F."/>
            <person name="Chin C.W."/>
            <person name="Chung M.K."/>
            <person name="Conn L."/>
            <person name="Conway A.B."/>
            <person name="Conway A.R."/>
            <person name="Creasy T.H."/>
            <person name="Dewar K."/>
            <person name="Dunn P."/>
            <person name="Etgu P."/>
            <person name="Feldblyum T.V."/>
            <person name="Feng J.-D."/>
            <person name="Fong B."/>
            <person name="Fujii C.Y."/>
            <person name="Gill J.E."/>
            <person name="Goldsmith A.D."/>
            <person name="Haas B."/>
            <person name="Hansen N.F."/>
            <person name="Hughes B."/>
            <person name="Huizar L."/>
            <person name="Hunter J.L."/>
            <person name="Jenkins J."/>
            <person name="Johnson-Hopson C."/>
            <person name="Khan S."/>
            <person name="Khaykin E."/>
            <person name="Kim C.J."/>
            <person name="Koo H.L."/>
            <person name="Kremenetskaia I."/>
            <person name="Kurtz D.B."/>
            <person name="Kwan A."/>
            <person name="Lam B."/>
            <person name="Langin-Hooper S."/>
            <person name="Lee A."/>
            <person name="Lee J.M."/>
            <person name="Lenz C.A."/>
            <person name="Li J.H."/>
            <person name="Li Y.-P."/>
            <person name="Lin X."/>
            <person name="Liu S.X."/>
            <person name="Liu Z.A."/>
            <person name="Luros J.S."/>
            <person name="Maiti R."/>
            <person name="Marziali A."/>
            <person name="Militscher J."/>
            <person name="Miranda M."/>
            <person name="Nguyen M."/>
            <person name="Nierman W.C."/>
            <person name="Osborne B.I."/>
            <person name="Pai G."/>
            <person name="Peterson J."/>
            <person name="Pham P.K."/>
            <person name="Rizzo M."/>
            <person name="Rooney T."/>
            <person name="Rowley D."/>
            <person name="Sakano H."/>
            <person name="Salzberg S.L."/>
            <person name="Schwartz J.R."/>
            <person name="Shinn P."/>
            <person name="Southwick A.M."/>
            <person name="Sun H."/>
            <person name="Tallon L.J."/>
            <person name="Tambunga G."/>
            <person name="Toriumi M.J."/>
            <person name="Town C.D."/>
            <person name="Utterback T."/>
            <person name="Van Aken S."/>
            <person name="Vaysberg M."/>
            <person name="Vysotskaia V.S."/>
            <person name="Walker M."/>
            <person name="Wu D."/>
            <person name="Yu G."/>
            <person name="Fraser C.M."/>
            <person name="Venter J.C."/>
            <person name="Davis R.W."/>
        </authorList>
    </citation>
    <scope>NUCLEOTIDE SEQUENCE [LARGE SCALE GENOMIC DNA]</scope>
    <source>
        <strain>cv. Columbia</strain>
    </source>
</reference>
<reference key="3">
    <citation type="journal article" date="2017" name="Plant J.">
        <title>Araport11: a complete reannotation of the Arabidopsis thaliana reference genome.</title>
        <authorList>
            <person name="Cheng C.Y."/>
            <person name="Krishnakumar V."/>
            <person name="Chan A.P."/>
            <person name="Thibaud-Nissen F."/>
            <person name="Schobel S."/>
            <person name="Town C.D."/>
        </authorList>
    </citation>
    <scope>GENOME REANNOTATION</scope>
    <source>
        <strain>cv. Columbia</strain>
    </source>
</reference>
<reference key="4">
    <citation type="journal article" date="2003" name="Science">
        <title>Empirical analysis of transcriptional activity in the Arabidopsis genome.</title>
        <authorList>
            <person name="Yamada K."/>
            <person name="Lim J."/>
            <person name="Dale J.M."/>
            <person name="Chen H."/>
            <person name="Shinn P."/>
            <person name="Palm C.J."/>
            <person name="Southwick A.M."/>
            <person name="Wu H.C."/>
            <person name="Kim C.J."/>
            <person name="Nguyen M."/>
            <person name="Pham P.K."/>
            <person name="Cheuk R.F."/>
            <person name="Karlin-Newmann G."/>
            <person name="Liu S.X."/>
            <person name="Lam B."/>
            <person name="Sakano H."/>
            <person name="Wu T."/>
            <person name="Yu G."/>
            <person name="Miranda M."/>
            <person name="Quach H.L."/>
            <person name="Tripp M."/>
            <person name="Chang C.H."/>
            <person name="Lee J.M."/>
            <person name="Toriumi M.J."/>
            <person name="Chan M.M."/>
            <person name="Tang C.C."/>
            <person name="Onodera C.S."/>
            <person name="Deng J.M."/>
            <person name="Akiyama K."/>
            <person name="Ansari Y."/>
            <person name="Arakawa T."/>
            <person name="Banh J."/>
            <person name="Banno F."/>
            <person name="Bowser L."/>
            <person name="Brooks S.Y."/>
            <person name="Carninci P."/>
            <person name="Chao Q."/>
            <person name="Choy N."/>
            <person name="Enju A."/>
            <person name="Goldsmith A.D."/>
            <person name="Gurjal M."/>
            <person name="Hansen N.F."/>
            <person name="Hayashizaki Y."/>
            <person name="Johnson-Hopson C."/>
            <person name="Hsuan V.W."/>
            <person name="Iida K."/>
            <person name="Karnes M."/>
            <person name="Khan S."/>
            <person name="Koesema E."/>
            <person name="Ishida J."/>
            <person name="Jiang P.X."/>
            <person name="Jones T."/>
            <person name="Kawai J."/>
            <person name="Kamiya A."/>
            <person name="Meyers C."/>
            <person name="Nakajima M."/>
            <person name="Narusaka M."/>
            <person name="Seki M."/>
            <person name="Sakurai T."/>
            <person name="Satou M."/>
            <person name="Tamse R."/>
            <person name="Vaysberg M."/>
            <person name="Wallender E.K."/>
            <person name="Wong C."/>
            <person name="Yamamura Y."/>
            <person name="Yuan S."/>
            <person name="Shinozaki K."/>
            <person name="Davis R.W."/>
            <person name="Theologis A."/>
            <person name="Ecker J.R."/>
        </authorList>
    </citation>
    <scope>NUCLEOTIDE SEQUENCE [LARGE SCALE MRNA]</scope>
    <source>
        <strain>cv. Columbia</strain>
    </source>
</reference>
<reference key="5">
    <citation type="submission" date="2006-07" db="EMBL/GenBank/DDBJ databases">
        <title>Large-scale analysis of RIKEN Arabidopsis full-length (RAFL) cDNAs.</title>
        <authorList>
            <person name="Totoki Y."/>
            <person name="Seki M."/>
            <person name="Ishida J."/>
            <person name="Nakajima M."/>
            <person name="Enju A."/>
            <person name="Kamiya A."/>
            <person name="Narusaka M."/>
            <person name="Shin-i T."/>
            <person name="Nakagawa M."/>
            <person name="Sakamoto N."/>
            <person name="Oishi K."/>
            <person name="Kohara Y."/>
            <person name="Kobayashi M."/>
            <person name="Toyoda A."/>
            <person name="Sakaki Y."/>
            <person name="Sakurai T."/>
            <person name="Iida K."/>
            <person name="Akiyama K."/>
            <person name="Satou M."/>
            <person name="Toyoda T."/>
            <person name="Konagaya A."/>
            <person name="Carninci P."/>
            <person name="Kawai J."/>
            <person name="Hayashizaki Y."/>
            <person name="Shinozaki K."/>
        </authorList>
    </citation>
    <scope>NUCLEOTIDE SEQUENCE [LARGE SCALE MRNA] OF 221-785</scope>
    <source>
        <strain>cv. Columbia</strain>
    </source>
</reference>
<organism>
    <name type="scientific">Arabidopsis thaliana</name>
    <name type="common">Mouse-ear cress</name>
    <dbReference type="NCBI Taxonomy" id="3702"/>
    <lineage>
        <taxon>Eukaryota</taxon>
        <taxon>Viridiplantae</taxon>
        <taxon>Streptophyta</taxon>
        <taxon>Embryophyta</taxon>
        <taxon>Tracheophyta</taxon>
        <taxon>Spermatophyta</taxon>
        <taxon>Magnoliopsida</taxon>
        <taxon>eudicotyledons</taxon>
        <taxon>Gunneridae</taxon>
        <taxon>Pentapetalae</taxon>
        <taxon>rosids</taxon>
        <taxon>malvids</taxon>
        <taxon>Brassicales</taxon>
        <taxon>Brassicaceae</taxon>
        <taxon>Camelineae</taxon>
        <taxon>Arabidopsis</taxon>
    </lineage>
</organism>
<comment type="function">
    <text evidence="1">The PI(3,5)P2 regulatory complex regulates both the synthesis and turnover of phosphatidylinositol 3,5-bisphosphate (PtdIns(3,5)P2).</text>
</comment>
<comment type="catalytic activity">
    <reaction>
        <text>a 1,2-diacyl-sn-glycero-3-phospho-(1D-myo-inositol-3,5-bisphosphate) + H2O = a 1,2-diacyl-sn-glycero-3-phospho-(1D-myo-inositol-3-phosphate) + phosphate</text>
        <dbReference type="Rhea" id="RHEA:32955"/>
        <dbReference type="ChEBI" id="CHEBI:15377"/>
        <dbReference type="ChEBI" id="CHEBI:43474"/>
        <dbReference type="ChEBI" id="CHEBI:57923"/>
        <dbReference type="ChEBI" id="CHEBI:58088"/>
    </reaction>
</comment>
<comment type="cofactor">
    <cofactor evidence="1">
        <name>Mg(2+)</name>
        <dbReference type="ChEBI" id="CHEBI:18420"/>
    </cofactor>
</comment>
<comment type="subunit">
    <text evidence="1">Component of the PI(3,5)P2 regulatory complex at least composed of ATG18, SAC/FIG4, FAB1 and VAC14.</text>
</comment>
<comment type="subcellular location">
    <subcellularLocation>
        <location evidence="1">Vacuole membrane</location>
        <topology evidence="1">Peripheral membrane protein</topology>
    </subcellularLocation>
</comment>
<comment type="tissue specificity">
    <text evidence="4">Ubiquitous with a higher level of expression in young seedlings than in other tissues.</text>
</comment>
<comment type="domain">
    <text evidence="1">The phosphatase catalytic core motif (or RXNCXDCLDRTN motif) from the SAC domain is found in metal-independent protein phosphatases and inositol polyphosphate phosphatases.</text>
</comment>
<comment type="sequence caution" evidence="5">
    <conflict type="erroneous gene model prediction">
        <sequence resource="EMBL-CDS" id="AAF97309"/>
    </conflict>
</comment>
<accession>Q8RW97</accession>
<accession>Q0WMR5</accession>
<accession>Q9LQI5</accession>
<gene>
    <name type="primary">SAC5</name>
    <name type="ordered locus">At1g17340</name>
    <name type="ORF">F28G4.21</name>
</gene>
<protein>
    <recommendedName>
        <fullName>Phosphoinositide phosphatase SAC5</fullName>
        <shortName>AtSAC5</shortName>
        <ecNumber>3.1.3.-</ecNumber>
    </recommendedName>
    <alternativeName>
        <fullName>Phosphatidylinositol 3,5-bisphosphate 5-phosphatase SAC5</fullName>
    </alternativeName>
    <alternativeName>
        <fullName>Protein SUPPRESSOR OF ACTIN 5</fullName>
    </alternativeName>
    <alternativeName>
        <fullName>SAC domain protein 5</fullName>
    </alternativeName>
</protein>
<name>SAC5_ARATH</name>